<comment type="function">
    <text evidence="1">NQR complex catalyzes the reduction of ubiquinone-1 to ubiquinol by two successive reactions, coupled with the transport of Na(+) ions from the cytoplasm to the periplasm. NqrA to NqrE are probably involved in the second step, the conversion of ubisemiquinone to ubiquinol.</text>
</comment>
<comment type="catalytic activity">
    <reaction evidence="1">
        <text>a ubiquinone + n Na(+)(in) + NADH + H(+) = a ubiquinol + n Na(+)(out) + NAD(+)</text>
        <dbReference type="Rhea" id="RHEA:47748"/>
        <dbReference type="Rhea" id="RHEA-COMP:9565"/>
        <dbReference type="Rhea" id="RHEA-COMP:9566"/>
        <dbReference type="ChEBI" id="CHEBI:15378"/>
        <dbReference type="ChEBI" id="CHEBI:16389"/>
        <dbReference type="ChEBI" id="CHEBI:17976"/>
        <dbReference type="ChEBI" id="CHEBI:29101"/>
        <dbReference type="ChEBI" id="CHEBI:57540"/>
        <dbReference type="ChEBI" id="CHEBI:57945"/>
        <dbReference type="EC" id="7.2.1.1"/>
    </reaction>
</comment>
<comment type="subunit">
    <text evidence="1">Composed of six subunits; NqrA, NqrB, NqrC, NqrD, NqrE and NqrF.</text>
</comment>
<comment type="similarity">
    <text evidence="1">Belongs to the NqrA family.</text>
</comment>
<comment type="sequence caution" evidence="2">
    <conflict type="frameshift">
        <sequence resource="EMBL-CDS" id="AAA62134"/>
    </conflict>
</comment>
<name>NQRA_HAEIN</name>
<reference key="1">
    <citation type="journal article" date="1995" name="Science">
        <title>Whole-genome random sequencing and assembly of Haemophilus influenzae Rd.</title>
        <authorList>
            <person name="Fleischmann R.D."/>
            <person name="Adams M.D."/>
            <person name="White O."/>
            <person name="Clayton R.A."/>
            <person name="Kirkness E.F."/>
            <person name="Kerlavage A.R."/>
            <person name="Bult C.J."/>
            <person name="Tomb J.-F."/>
            <person name="Dougherty B.A."/>
            <person name="Merrick J.M."/>
            <person name="McKenney K."/>
            <person name="Sutton G.G."/>
            <person name="FitzHugh W."/>
            <person name="Fields C.A."/>
            <person name="Gocayne J.D."/>
            <person name="Scott J.D."/>
            <person name="Shirley R."/>
            <person name="Liu L.-I."/>
            <person name="Glodek A."/>
            <person name="Kelley J.M."/>
            <person name="Weidman J.F."/>
            <person name="Phillips C.A."/>
            <person name="Spriggs T."/>
            <person name="Hedblom E."/>
            <person name="Cotton M.D."/>
            <person name="Utterback T.R."/>
            <person name="Hanna M.C."/>
            <person name="Nguyen D.T."/>
            <person name="Saudek D.M."/>
            <person name="Brandon R.C."/>
            <person name="Fine L.D."/>
            <person name="Fritchman J.L."/>
            <person name="Fuhrmann J.L."/>
            <person name="Geoghagen N.S.M."/>
            <person name="Gnehm C.L."/>
            <person name="McDonald L.A."/>
            <person name="Small K.V."/>
            <person name="Fraser C.M."/>
            <person name="Smith H.O."/>
            <person name="Venter J.C."/>
        </authorList>
    </citation>
    <scope>NUCLEOTIDE SEQUENCE [LARGE SCALE GENOMIC DNA]</scope>
    <source>
        <strain>ATCC 51907 / DSM 11121 / KW20 / Rd</strain>
    </source>
</reference>
<reference key="2">
    <citation type="submission" date="1996-09" db="EMBL/GenBank/DDBJ databases">
        <authorList>
            <person name="White O."/>
            <person name="Clayton R.A."/>
            <person name="Kerlavage A.R."/>
            <person name="Fleischmann R.D."/>
        </authorList>
    </citation>
    <scope>SEQUENCE REVISION</scope>
</reference>
<reference key="3">
    <citation type="submission" date="1995-01" db="EMBL/GenBank/DDBJ databases">
        <authorList>
            <person name="Barcak G.J."/>
            <person name="Heimer S.R."/>
        </authorList>
    </citation>
    <scope>NUCLEOTIDE SEQUENCE [GENOMIC DNA] OF 1-75</scope>
    <source>
        <strain>ATCC 51907 / DSM 11121 / KW20 / Rd</strain>
    </source>
</reference>
<reference key="4">
    <citation type="journal article" date="1996" name="FEBS Lett.">
        <title>Existence of Na+-translocating NADH-quinone reductase in Haemophilus influenzae.</title>
        <authorList>
            <person name="Hayashi M."/>
            <person name="Nakayama Y."/>
            <person name="Unemoto T."/>
        </authorList>
    </citation>
    <scope>IDENTIFICATION AS NQR SYSTEM</scope>
    <source>
        <strain>ATCC 51907 / DSM 11121 / KW20 / Rd</strain>
    </source>
</reference>
<reference key="5">
    <citation type="journal article" date="2000" name="Electrophoresis">
        <title>Two-dimensional map of the proteome of Haemophilus influenzae.</title>
        <authorList>
            <person name="Langen H."/>
            <person name="Takacs B."/>
            <person name="Evers S."/>
            <person name="Berndt P."/>
            <person name="Lahm H.W."/>
            <person name="Wipf B."/>
            <person name="Gray C."/>
            <person name="Fountoulakis M."/>
        </authorList>
    </citation>
    <scope>IDENTIFICATION BY MASS SPECTROMETRY</scope>
    <source>
        <strain>ATCC 51907 / DSM 11121 / KW20 / Rd</strain>
    </source>
</reference>
<evidence type="ECO:0000255" key="1">
    <source>
        <dbReference type="HAMAP-Rule" id="MF_00425"/>
    </source>
</evidence>
<evidence type="ECO:0000305" key="2"/>
<protein>
    <recommendedName>
        <fullName evidence="1">Na(+)-translocating NADH-quinone reductase subunit A</fullName>
        <shortName evidence="1">Na(+)-NQR subunit A</shortName>
        <shortName evidence="1">Na(+)-translocating NQR subunit A</shortName>
        <ecNumber evidence="1">7.2.1.1</ecNumber>
    </recommendedName>
    <alternativeName>
        <fullName evidence="1">NQR complex subunit A</fullName>
    </alternativeName>
    <alternativeName>
        <fullName evidence="1">NQR-1 subunit A</fullName>
    </alternativeName>
</protein>
<accession>P43955</accession>
<accession>P43956</accession>
<dbReference type="EC" id="7.2.1.1" evidence="1"/>
<dbReference type="EMBL" id="L42023">
    <property type="protein sequence ID" value="AAC21836.1"/>
    <property type="molecule type" value="Genomic_DNA"/>
</dbReference>
<dbReference type="EMBL" id="U20229">
    <property type="protein sequence ID" value="AAA62134.1"/>
    <property type="status" value="ALT_FRAME"/>
    <property type="molecule type" value="Genomic_DNA"/>
</dbReference>
<dbReference type="PIR" id="I64002">
    <property type="entry name" value="I64002"/>
</dbReference>
<dbReference type="RefSeq" id="NP_438334.1">
    <property type="nucleotide sequence ID" value="NC_000907.1"/>
</dbReference>
<dbReference type="SMR" id="P43955"/>
<dbReference type="STRING" id="71421.HI_0164"/>
<dbReference type="DNASU" id="951076"/>
<dbReference type="EnsemblBacteria" id="AAC21836">
    <property type="protein sequence ID" value="AAC21836"/>
    <property type="gene ID" value="HI_0164"/>
</dbReference>
<dbReference type="KEGG" id="hin:HI_0164"/>
<dbReference type="PATRIC" id="fig|71421.8.peg.170"/>
<dbReference type="eggNOG" id="COG1726">
    <property type="taxonomic scope" value="Bacteria"/>
</dbReference>
<dbReference type="HOGENOM" id="CLU_046656_0_0_6"/>
<dbReference type="OrthoDB" id="9774536at2"/>
<dbReference type="PhylomeDB" id="P43955"/>
<dbReference type="BioCyc" id="HINF71421:G1GJ1-176-MONOMER"/>
<dbReference type="Proteomes" id="UP000000579">
    <property type="component" value="Chromosome"/>
</dbReference>
<dbReference type="GO" id="GO:0016655">
    <property type="term" value="F:oxidoreductase activity, acting on NAD(P)H, quinone or similar compound as acceptor"/>
    <property type="evidence" value="ECO:0007669"/>
    <property type="project" value="UniProtKB-UniRule"/>
</dbReference>
<dbReference type="GO" id="GO:0006814">
    <property type="term" value="P:sodium ion transport"/>
    <property type="evidence" value="ECO:0007669"/>
    <property type="project" value="UniProtKB-UniRule"/>
</dbReference>
<dbReference type="Gene3D" id="2.40.50.100">
    <property type="match status" value="1"/>
</dbReference>
<dbReference type="HAMAP" id="MF_00425">
    <property type="entry name" value="NqrA"/>
    <property type="match status" value="1"/>
</dbReference>
<dbReference type="InterPro" id="IPR008703">
    <property type="entry name" value="NqrA"/>
</dbReference>
<dbReference type="InterPro" id="IPR056148">
    <property type="entry name" value="NQRA_2nd"/>
</dbReference>
<dbReference type="InterPro" id="IPR022615">
    <property type="entry name" value="NqrA_C_domain"/>
</dbReference>
<dbReference type="InterPro" id="IPR056147">
    <property type="entry name" value="NQRA_N"/>
</dbReference>
<dbReference type="NCBIfam" id="TIGR01936">
    <property type="entry name" value="nqrA"/>
    <property type="match status" value="1"/>
</dbReference>
<dbReference type="NCBIfam" id="NF003759">
    <property type="entry name" value="PRK05352.1-2"/>
    <property type="match status" value="1"/>
</dbReference>
<dbReference type="PANTHER" id="PTHR37839">
    <property type="entry name" value="NA(+)-TRANSLOCATING NADH-QUINONE REDUCTASE SUBUNIT A"/>
    <property type="match status" value="1"/>
</dbReference>
<dbReference type="PANTHER" id="PTHR37839:SF1">
    <property type="entry name" value="NA(+)-TRANSLOCATING NADH-QUINONE REDUCTASE SUBUNIT A"/>
    <property type="match status" value="1"/>
</dbReference>
<dbReference type="Pfam" id="PF24836">
    <property type="entry name" value="NQRA_2nd"/>
    <property type="match status" value="1"/>
</dbReference>
<dbReference type="Pfam" id="PF05896">
    <property type="entry name" value="NQRA_N"/>
    <property type="match status" value="1"/>
</dbReference>
<dbReference type="Pfam" id="PF11973">
    <property type="entry name" value="NQRA_SLBB"/>
    <property type="match status" value="1"/>
</dbReference>
<feature type="chain" id="PRO_0000214198" description="Na(+)-translocating NADH-quinone reductase subunit A">
    <location>
        <begin position="1"/>
        <end position="447"/>
    </location>
</feature>
<organism>
    <name type="scientific">Haemophilus influenzae (strain ATCC 51907 / DSM 11121 / KW20 / Rd)</name>
    <dbReference type="NCBI Taxonomy" id="71421"/>
    <lineage>
        <taxon>Bacteria</taxon>
        <taxon>Pseudomonadati</taxon>
        <taxon>Pseudomonadota</taxon>
        <taxon>Gammaproteobacteria</taxon>
        <taxon>Pasteurellales</taxon>
        <taxon>Pasteurellaceae</taxon>
        <taxon>Haemophilus</taxon>
    </lineage>
</organism>
<proteinExistence type="evidence at protein level"/>
<keyword id="KW-0406">Ion transport</keyword>
<keyword id="KW-0520">NAD</keyword>
<keyword id="KW-1185">Reference proteome</keyword>
<keyword id="KW-0915">Sodium</keyword>
<keyword id="KW-0739">Sodium transport</keyword>
<keyword id="KW-1278">Translocase</keyword>
<keyword id="KW-0813">Transport</keyword>
<keyword id="KW-0830">Ubiquinone</keyword>
<sequence>MITIKKGLDLPIAGKPAQVIHSGNAVNQVAILGEEYVGMRPSMKVREGDVVKKGQVLFEDKKNPGVIFTAPASGTITAINRGEKRVLQSVVINVEGDEKITFAKYSTEQLNTLSSEQVKQNLIESGLWTALRTRPFSKVPSIESEASSIFVNAMDTNPLAADPSVVLKEYSQDFTNGLTVLSRLFPSKPLHLCKAGDSNIPTADLENLQIHDFTGVHPAGLVGTHIHFIDPVGIQKTVWHINYQDVIAVGKLFTTGELYSERVISLAGPQVKEPRLVRTTIGANLSQLTQNELSAGKNRVISGSVLCGQIAKDSHDYLGRYALQVSVIAEGNEKEFFGWIMPQANKYSVTRTVLGHFSKKLFNFTTSENGGERAMVPIGSYERVMPLDILPTLLLRDLIVGDTDGAQELGCLELDEEDLALCSFVCPGKYEYGSILRQVLDKIEKEG</sequence>
<gene>
    <name evidence="1" type="primary">nqrA</name>
    <name type="ordered locus">HI_0164</name>
</gene>